<organism>
    <name type="scientific">Methanosarcina acetivorans (strain ATCC 35395 / DSM 2834 / JCM 12185 / C2A)</name>
    <dbReference type="NCBI Taxonomy" id="188937"/>
    <lineage>
        <taxon>Archaea</taxon>
        <taxon>Methanobacteriati</taxon>
        <taxon>Methanobacteriota</taxon>
        <taxon>Stenosarchaea group</taxon>
        <taxon>Methanomicrobia</taxon>
        <taxon>Methanosarcinales</taxon>
        <taxon>Methanosarcinaceae</taxon>
        <taxon>Methanosarcina</taxon>
    </lineage>
</organism>
<protein>
    <recommendedName>
        <fullName>Translation initiation factor 1A 3</fullName>
        <shortName>aIF-1A 3</shortName>
    </recommendedName>
</protein>
<keyword id="KW-0396">Initiation factor</keyword>
<keyword id="KW-0648">Protein biosynthesis</keyword>
<keyword id="KW-1185">Reference proteome</keyword>
<feature type="chain" id="PRO_0000145120" description="Translation initiation factor 1A 3">
    <location>
        <begin position="1"/>
        <end position="110"/>
    </location>
</feature>
<feature type="domain" description="S1-like">
    <location>
        <begin position="22"/>
        <end position="96"/>
    </location>
</feature>
<feature type="region of interest" description="Disordered" evidence="2">
    <location>
        <begin position="1"/>
        <end position="29"/>
    </location>
</feature>
<feature type="compositionally biased region" description="Low complexity" evidence="2">
    <location>
        <begin position="7"/>
        <end position="18"/>
    </location>
</feature>
<reference key="1">
    <citation type="journal article" date="2002" name="Genome Res.">
        <title>The genome of Methanosarcina acetivorans reveals extensive metabolic and physiological diversity.</title>
        <authorList>
            <person name="Galagan J.E."/>
            <person name="Nusbaum C."/>
            <person name="Roy A."/>
            <person name="Endrizzi M.G."/>
            <person name="Macdonald P."/>
            <person name="FitzHugh W."/>
            <person name="Calvo S."/>
            <person name="Engels R."/>
            <person name="Smirnov S."/>
            <person name="Atnoor D."/>
            <person name="Brown A."/>
            <person name="Allen N."/>
            <person name="Naylor J."/>
            <person name="Stange-Thomann N."/>
            <person name="DeArellano K."/>
            <person name="Johnson R."/>
            <person name="Linton L."/>
            <person name="McEwan P."/>
            <person name="McKernan K."/>
            <person name="Talamas J."/>
            <person name="Tirrell A."/>
            <person name="Ye W."/>
            <person name="Zimmer A."/>
            <person name="Barber R.D."/>
            <person name="Cann I."/>
            <person name="Graham D.E."/>
            <person name="Grahame D.A."/>
            <person name="Guss A.M."/>
            <person name="Hedderich R."/>
            <person name="Ingram-Smith C."/>
            <person name="Kuettner H.C."/>
            <person name="Krzycki J.A."/>
            <person name="Leigh J.A."/>
            <person name="Li W."/>
            <person name="Liu J."/>
            <person name="Mukhopadhyay B."/>
            <person name="Reeve J.N."/>
            <person name="Smith K."/>
            <person name="Springer T.A."/>
            <person name="Umayam L.A."/>
            <person name="White O."/>
            <person name="White R.H."/>
            <person name="de Macario E.C."/>
            <person name="Ferry J.G."/>
            <person name="Jarrell K.F."/>
            <person name="Jing H."/>
            <person name="Macario A.J.L."/>
            <person name="Paulsen I.T."/>
            <person name="Pritchett M."/>
            <person name="Sowers K.R."/>
            <person name="Swanson R.V."/>
            <person name="Zinder S.H."/>
            <person name="Lander E."/>
            <person name="Metcalf W.W."/>
            <person name="Birren B."/>
        </authorList>
    </citation>
    <scope>NUCLEOTIDE SEQUENCE [LARGE SCALE GENOMIC DNA]</scope>
    <source>
        <strain>ATCC 35395 / DSM 2834 / JCM 12185 / C2A</strain>
    </source>
</reference>
<evidence type="ECO:0000250" key="1"/>
<evidence type="ECO:0000256" key="2">
    <source>
        <dbReference type="SAM" id="MobiDB-lite"/>
    </source>
</evidence>
<evidence type="ECO:0000305" key="3"/>
<dbReference type="EMBL" id="AE010299">
    <property type="protein sequence ID" value="AAM04769.1"/>
    <property type="molecule type" value="Genomic_DNA"/>
</dbReference>
<dbReference type="RefSeq" id="WP_011021371.1">
    <property type="nucleotide sequence ID" value="NC_003552.1"/>
</dbReference>
<dbReference type="SMR" id="Q8TR31"/>
<dbReference type="FunCoup" id="Q8TR31">
    <property type="interactions" value="130"/>
</dbReference>
<dbReference type="STRING" id="188937.MA_1353"/>
<dbReference type="EnsemblBacteria" id="AAM04769">
    <property type="protein sequence ID" value="AAM04769"/>
    <property type="gene ID" value="MA_1353"/>
</dbReference>
<dbReference type="GeneID" id="1473241"/>
<dbReference type="KEGG" id="mac:MA_1353"/>
<dbReference type="HOGENOM" id="CLU_109098_1_2_2"/>
<dbReference type="InParanoid" id="Q8TR31"/>
<dbReference type="PhylomeDB" id="Q8TR31"/>
<dbReference type="Proteomes" id="UP000002487">
    <property type="component" value="Chromosome"/>
</dbReference>
<dbReference type="GO" id="GO:0005737">
    <property type="term" value="C:cytoplasm"/>
    <property type="evidence" value="ECO:0000318"/>
    <property type="project" value="GO_Central"/>
</dbReference>
<dbReference type="GO" id="GO:0003723">
    <property type="term" value="F:RNA binding"/>
    <property type="evidence" value="ECO:0007669"/>
    <property type="project" value="InterPro"/>
</dbReference>
<dbReference type="GO" id="GO:0003743">
    <property type="term" value="F:translation initiation factor activity"/>
    <property type="evidence" value="ECO:0000318"/>
    <property type="project" value="GO_Central"/>
</dbReference>
<dbReference type="GO" id="GO:0006413">
    <property type="term" value="P:translational initiation"/>
    <property type="evidence" value="ECO:0000318"/>
    <property type="project" value="GO_Central"/>
</dbReference>
<dbReference type="CDD" id="cd05793">
    <property type="entry name" value="S1_IF1A"/>
    <property type="match status" value="1"/>
</dbReference>
<dbReference type="Gene3D" id="2.40.50.140">
    <property type="entry name" value="Nucleic acid-binding proteins"/>
    <property type="match status" value="1"/>
</dbReference>
<dbReference type="HAMAP" id="MF_00216">
    <property type="entry name" value="aIF_1A"/>
    <property type="match status" value="1"/>
</dbReference>
<dbReference type="InterPro" id="IPR012340">
    <property type="entry name" value="NA-bd_OB-fold"/>
</dbReference>
<dbReference type="InterPro" id="IPR006196">
    <property type="entry name" value="RNA-binding_domain_S1_IF1"/>
</dbReference>
<dbReference type="InterPro" id="IPR001253">
    <property type="entry name" value="TIF_eIF-1A"/>
</dbReference>
<dbReference type="InterPro" id="IPR018104">
    <property type="entry name" value="TIF_eIF-1A_CS"/>
</dbReference>
<dbReference type="NCBIfam" id="TIGR00523">
    <property type="entry name" value="eIF-1A"/>
    <property type="match status" value="1"/>
</dbReference>
<dbReference type="NCBIfam" id="NF003084">
    <property type="entry name" value="PRK04012.1-3"/>
    <property type="match status" value="1"/>
</dbReference>
<dbReference type="NCBIfam" id="NF003085">
    <property type="entry name" value="PRK04012.1-5"/>
    <property type="match status" value="1"/>
</dbReference>
<dbReference type="PANTHER" id="PTHR21668">
    <property type="entry name" value="EIF-1A"/>
    <property type="match status" value="1"/>
</dbReference>
<dbReference type="Pfam" id="PF01176">
    <property type="entry name" value="eIF-1a"/>
    <property type="match status" value="1"/>
</dbReference>
<dbReference type="SMART" id="SM00652">
    <property type="entry name" value="eIF1a"/>
    <property type="match status" value="1"/>
</dbReference>
<dbReference type="SUPFAM" id="SSF50249">
    <property type="entry name" value="Nucleic acid-binding proteins"/>
    <property type="match status" value="1"/>
</dbReference>
<dbReference type="PROSITE" id="PS01262">
    <property type="entry name" value="IF1A"/>
    <property type="match status" value="1"/>
</dbReference>
<dbReference type="PROSITE" id="PS50832">
    <property type="entry name" value="S1_IF1_TYPE"/>
    <property type="match status" value="1"/>
</dbReference>
<proteinExistence type="inferred from homology"/>
<gene>
    <name type="primary">eIF1A3</name>
    <name type="ordered locus">MA_1353</name>
</gene>
<name>IF1A3_METAC</name>
<comment type="function">
    <text evidence="1">Seems to be required for maximal rate of protein biosynthesis. Enhances ribosome dissociation into subunits and stabilizes the binding of the initiator Met-tRNA(I) to 40 S ribosomal subunits (By similarity).</text>
</comment>
<comment type="similarity">
    <text evidence="3">Belongs to the eIF-1A family.</text>
</comment>
<accession>Q8TR31</accession>
<sequence>MIRKRQSGSNKSVSSGNNQEVTRVRTPRKDRNEVLATVASLLGSKRVTLQCMDGVVRMGRIPGSKNKKMWVREGDVVIANPWEIQDSKADVIWKYTKPQVDWLERKGYLN</sequence>